<feature type="chain" id="PRO_0000357487" description="2-hydroxy-3-keto-5-methylthiopentenyl-1-phosphate phosphatase">
    <location>
        <begin position="1"/>
        <end position="228"/>
    </location>
</feature>
<proteinExistence type="inferred from homology"/>
<sequence length="228" mass="25970">MKPIIFCDFDGTITETDNIFSLMTEFVPQESEKIAKAMMEQTISFKDGLSAMFHLLSTEQKDEVIQYLMDTAVIREGFEDFVRYAQNHDIPFYIVSGGVDFFIEPLVEKYGPFSGIYCNKADFSGEQIKLIYSNSCDEECAKYSTQGCGCCKPSVMRKVAKEEHFKIVIGDSLSDFEAAKQADIVLARDHLIQRCEELHVSYKPFITFHDCLKIVQELMETNHAVPTT</sequence>
<accession>B1HYT5</accession>
<keyword id="KW-0028">Amino-acid biosynthesis</keyword>
<keyword id="KW-0378">Hydrolase</keyword>
<keyword id="KW-0486">Methionine biosynthesis</keyword>
<evidence type="ECO:0000255" key="1">
    <source>
        <dbReference type="HAMAP-Rule" id="MF_01680"/>
    </source>
</evidence>
<evidence type="ECO:0000305" key="2"/>
<reference key="1">
    <citation type="journal article" date="2008" name="J. Bacteriol.">
        <title>Complete genome sequence of the mosquitocidal bacterium Bacillus sphaericus C3-41 and comparison with those of closely related Bacillus species.</title>
        <authorList>
            <person name="Hu X."/>
            <person name="Fan W."/>
            <person name="Han B."/>
            <person name="Liu H."/>
            <person name="Zheng D."/>
            <person name="Li Q."/>
            <person name="Dong W."/>
            <person name="Yan J."/>
            <person name="Gao M."/>
            <person name="Berry C."/>
            <person name="Yuan Z."/>
        </authorList>
    </citation>
    <scope>NUCLEOTIDE SEQUENCE [LARGE SCALE GENOMIC DNA]</scope>
    <source>
        <strain>C3-41</strain>
    </source>
</reference>
<name>MTNX_LYSSC</name>
<comment type="function">
    <text evidence="1">Dephosphorylates 2-hydroxy-3-keto-5-methylthiopentenyl-1-phosphate (HK-MTPenyl-1-P) yielding 1,2-dihydroxy-3-keto-5-methylthiopentene (DHK-MTPene).</text>
</comment>
<comment type="catalytic activity">
    <reaction evidence="1">
        <text>2-hydroxy-5-methylsulfanyl-3-oxopent-1-enyl phosphate + H2O = 1,2-dihydroxy-5-(methylsulfanyl)pent-1-en-3-one + phosphate</text>
        <dbReference type="Rhea" id="RHEA:14481"/>
        <dbReference type="ChEBI" id="CHEBI:15377"/>
        <dbReference type="ChEBI" id="CHEBI:43474"/>
        <dbReference type="ChEBI" id="CHEBI:49252"/>
        <dbReference type="ChEBI" id="CHEBI:59505"/>
        <dbReference type="EC" id="3.1.3.87"/>
    </reaction>
</comment>
<comment type="pathway">
    <text evidence="1">Amino-acid biosynthesis; L-methionine biosynthesis via salvage pathway; L-methionine from S-methyl-5-thio-alpha-D-ribose 1-phosphate: step 4/6.</text>
</comment>
<comment type="similarity">
    <text evidence="1">Belongs to the HAD-like hydrolase superfamily. MtnX family.</text>
</comment>
<comment type="sequence caution" evidence="2">
    <conflict type="erroneous initiation">
        <sequence resource="EMBL-CDS" id="ACA41808"/>
    </conflict>
</comment>
<dbReference type="EC" id="3.1.3.87" evidence="1"/>
<dbReference type="EMBL" id="CP000817">
    <property type="protein sequence ID" value="ACA41808.1"/>
    <property type="status" value="ALT_INIT"/>
    <property type="molecule type" value="Genomic_DNA"/>
</dbReference>
<dbReference type="RefSeq" id="WP_031416525.1">
    <property type="nucleotide sequence ID" value="NC_010382.1"/>
</dbReference>
<dbReference type="SMR" id="B1HYT5"/>
<dbReference type="EnsemblBacteria" id="ACA41808">
    <property type="protein sequence ID" value="ACA41808"/>
    <property type="gene ID" value="Bsph_4351"/>
</dbReference>
<dbReference type="KEGG" id="lsp:Bsph_4351"/>
<dbReference type="HOGENOM" id="CLU_058495_2_1_9"/>
<dbReference type="UniPathway" id="UPA00904">
    <property type="reaction ID" value="UER00877"/>
</dbReference>
<dbReference type="Proteomes" id="UP000002164">
    <property type="component" value="Chromosome"/>
</dbReference>
<dbReference type="GO" id="GO:0005737">
    <property type="term" value="C:cytoplasm"/>
    <property type="evidence" value="ECO:0007669"/>
    <property type="project" value="TreeGrafter"/>
</dbReference>
<dbReference type="GO" id="GO:0043716">
    <property type="term" value="F:2-hydroxy-3-keto-5-methylthiopentenyl-1-phosphate phosphatase activity"/>
    <property type="evidence" value="ECO:0007669"/>
    <property type="project" value="UniProtKB-UniRule"/>
</dbReference>
<dbReference type="GO" id="GO:0036424">
    <property type="term" value="F:L-phosphoserine phosphatase activity"/>
    <property type="evidence" value="ECO:0007669"/>
    <property type="project" value="TreeGrafter"/>
</dbReference>
<dbReference type="GO" id="GO:0000287">
    <property type="term" value="F:magnesium ion binding"/>
    <property type="evidence" value="ECO:0007669"/>
    <property type="project" value="TreeGrafter"/>
</dbReference>
<dbReference type="GO" id="GO:0019509">
    <property type="term" value="P:L-methionine salvage from methylthioadenosine"/>
    <property type="evidence" value="ECO:0007669"/>
    <property type="project" value="UniProtKB-UniRule"/>
</dbReference>
<dbReference type="GO" id="GO:0006564">
    <property type="term" value="P:L-serine biosynthetic process"/>
    <property type="evidence" value="ECO:0007669"/>
    <property type="project" value="TreeGrafter"/>
</dbReference>
<dbReference type="CDD" id="cd07524">
    <property type="entry name" value="HAD_Pase"/>
    <property type="match status" value="1"/>
</dbReference>
<dbReference type="Gene3D" id="3.90.1470.20">
    <property type="match status" value="1"/>
</dbReference>
<dbReference type="Gene3D" id="3.40.50.1000">
    <property type="entry name" value="HAD superfamily/HAD-like"/>
    <property type="match status" value="1"/>
</dbReference>
<dbReference type="HAMAP" id="MF_01680">
    <property type="entry name" value="Salvage_MtnX"/>
    <property type="match status" value="1"/>
</dbReference>
<dbReference type="InterPro" id="IPR050582">
    <property type="entry name" value="HAD-like_SerB"/>
</dbReference>
<dbReference type="InterPro" id="IPR036412">
    <property type="entry name" value="HAD-like_sf"/>
</dbReference>
<dbReference type="InterPro" id="IPR017718">
    <property type="entry name" value="HAD-SF_hydro_IB_MtnX"/>
</dbReference>
<dbReference type="InterPro" id="IPR006384">
    <property type="entry name" value="HAD_hydro_PyrdxlP_Pase-like"/>
</dbReference>
<dbReference type="InterPro" id="IPR023214">
    <property type="entry name" value="HAD_sf"/>
</dbReference>
<dbReference type="NCBIfam" id="TIGR01489">
    <property type="entry name" value="DKMTPPase-SF"/>
    <property type="match status" value="1"/>
</dbReference>
<dbReference type="NCBIfam" id="TIGR01488">
    <property type="entry name" value="HAD-SF-IB"/>
    <property type="match status" value="1"/>
</dbReference>
<dbReference type="PANTHER" id="PTHR43344">
    <property type="entry name" value="PHOSPHOSERINE PHOSPHATASE"/>
    <property type="match status" value="1"/>
</dbReference>
<dbReference type="PANTHER" id="PTHR43344:SF21">
    <property type="entry name" value="POLYOL PHOSPHATE PHOSPHATASE PYP1"/>
    <property type="match status" value="1"/>
</dbReference>
<dbReference type="Pfam" id="PF12710">
    <property type="entry name" value="HAD"/>
    <property type="match status" value="1"/>
</dbReference>
<dbReference type="SUPFAM" id="SSF56784">
    <property type="entry name" value="HAD-like"/>
    <property type="match status" value="1"/>
</dbReference>
<protein>
    <recommendedName>
        <fullName evidence="1">2-hydroxy-3-keto-5-methylthiopentenyl-1-phosphate phosphatase</fullName>
        <shortName evidence="1">HK-MTPenyl-1-P phosphatase</shortName>
        <ecNumber evidence="1">3.1.3.87</ecNumber>
    </recommendedName>
</protein>
<gene>
    <name evidence="1" type="primary">mtnX</name>
    <name type="ordered locus">Bsph_4351</name>
</gene>
<organism>
    <name type="scientific">Lysinibacillus sphaericus (strain C3-41)</name>
    <dbReference type="NCBI Taxonomy" id="444177"/>
    <lineage>
        <taxon>Bacteria</taxon>
        <taxon>Bacillati</taxon>
        <taxon>Bacillota</taxon>
        <taxon>Bacilli</taxon>
        <taxon>Bacillales</taxon>
        <taxon>Bacillaceae</taxon>
        <taxon>Lysinibacillus</taxon>
    </lineage>
</organism>